<keyword id="KW-1072">Activation of host autophagy by virus</keyword>
<keyword id="KW-0067">ATP-binding</keyword>
<keyword id="KW-0068">Autocatalytic cleavage</keyword>
<keyword id="KW-0167">Capsid protein</keyword>
<keyword id="KW-0191">Covalent protein-RNA linkage</keyword>
<keyword id="KW-0235">DNA replication</keyword>
<keyword id="KW-1262">Eukaryotic host gene expression shutoff by virus</keyword>
<keyword id="KW-1193">Eukaryotic host translation shutoff by virus</keyword>
<keyword id="KW-0347">Helicase</keyword>
<keyword id="KW-1035">Host cytoplasm</keyword>
<keyword id="KW-1036">Host cytoplasmic vesicle</keyword>
<keyword id="KW-1190">Host gene expression shutoff by virus</keyword>
<keyword id="KW-1043">Host membrane</keyword>
<keyword id="KW-1192">Host mRNA suppression by virus</keyword>
<keyword id="KW-1048">Host nucleus</keyword>
<keyword id="KW-0945">Host-virus interaction</keyword>
<keyword id="KW-0378">Hydrolase</keyword>
<keyword id="KW-1090">Inhibition of host innate immune response by virus</keyword>
<keyword id="KW-1099">Inhibition of host mRNA nuclear export by virus</keyword>
<keyword id="KW-1088">Inhibition of host RIG-I by virus</keyword>
<keyword id="KW-1113">Inhibition of host RLR pathway by virus</keyword>
<keyword id="KW-0407">Ion channel</keyword>
<keyword id="KW-0406">Ion transport</keyword>
<keyword id="KW-0449">Lipoprotein</keyword>
<keyword id="KW-0460">Magnesium</keyword>
<keyword id="KW-0472">Membrane</keyword>
<keyword id="KW-0479">Metal-binding</keyword>
<keyword id="KW-0519">Myristate</keyword>
<keyword id="KW-0547">Nucleotide-binding</keyword>
<keyword id="KW-0548">Nucleotidyltransferase</keyword>
<keyword id="KW-0597">Phosphoprotein</keyword>
<keyword id="KW-1172">Pore-mediated penetration of viral genome into host cell</keyword>
<keyword id="KW-0645">Protease</keyword>
<keyword id="KW-0677">Repeat</keyword>
<keyword id="KW-0694">RNA-binding</keyword>
<keyword id="KW-0696">RNA-directed RNA polymerase</keyword>
<keyword id="KW-1143">T=pseudo3 icosahedral capsid protein</keyword>
<keyword id="KW-0788">Thiol protease</keyword>
<keyword id="KW-0808">Transferase</keyword>
<keyword id="KW-0813">Transport</keyword>
<keyword id="KW-1161">Viral attachment to host cell</keyword>
<keyword id="KW-0899">Viral immunoevasion</keyword>
<keyword id="KW-1182">Viral ion channel</keyword>
<keyword id="KW-1162">Viral penetration into host cytoplasm</keyword>
<keyword id="KW-0693">Viral RNA replication</keyword>
<keyword id="KW-0946">Virion</keyword>
<keyword id="KW-1164">Virus endocytosis by host</keyword>
<keyword id="KW-1160">Virus entry into host cell</keyword>
<keyword id="KW-0862">Zinc</keyword>
<keyword id="KW-0863">Zinc-finger</keyword>
<dbReference type="EC" id="3.4.22.29" evidence="2"/>
<dbReference type="EC" id="3.6.1.15" evidence="2"/>
<dbReference type="EC" id="3.4.22.28" evidence="12"/>
<dbReference type="EC" id="2.7.7.48" evidence="10"/>
<dbReference type="EMBL" id="X79047">
    <property type="protein sequence ID" value="CAA55650.1"/>
    <property type="molecule type" value="Genomic_RNA"/>
</dbReference>
<dbReference type="EMBL" id="X77708">
    <property type="protein sequence ID" value="CAA54783.1"/>
    <property type="molecule type" value="Genomic_RNA"/>
</dbReference>
<dbReference type="PIR" id="S44194">
    <property type="entry name" value="S44194"/>
</dbReference>
<dbReference type="SMR" id="Q66575"/>
<dbReference type="MEROPS" id="C03.011"/>
<dbReference type="MEROPS" id="C03.020"/>
<dbReference type="Proteomes" id="UP000008273">
    <property type="component" value="Segment"/>
</dbReference>
<dbReference type="Proteomes" id="UP000168527">
    <property type="component" value="Genome"/>
</dbReference>
<dbReference type="GO" id="GO:0044162">
    <property type="term" value="C:host cell cytoplasmic vesicle membrane"/>
    <property type="evidence" value="ECO:0007669"/>
    <property type="project" value="UniProtKB-SubCell"/>
</dbReference>
<dbReference type="GO" id="GO:0042025">
    <property type="term" value="C:host cell nucleus"/>
    <property type="evidence" value="ECO:0007669"/>
    <property type="project" value="UniProtKB-SubCell"/>
</dbReference>
<dbReference type="GO" id="GO:0016020">
    <property type="term" value="C:membrane"/>
    <property type="evidence" value="ECO:0007669"/>
    <property type="project" value="UniProtKB-KW"/>
</dbReference>
<dbReference type="GO" id="GO:0039618">
    <property type="term" value="C:T=pseudo3 icosahedral viral capsid"/>
    <property type="evidence" value="ECO:0007669"/>
    <property type="project" value="UniProtKB-KW"/>
</dbReference>
<dbReference type="GO" id="GO:0005524">
    <property type="term" value="F:ATP binding"/>
    <property type="evidence" value="ECO:0007669"/>
    <property type="project" value="UniProtKB-KW"/>
</dbReference>
<dbReference type="GO" id="GO:0016887">
    <property type="term" value="F:ATP hydrolysis activity"/>
    <property type="evidence" value="ECO:0007669"/>
    <property type="project" value="InterPro"/>
</dbReference>
<dbReference type="GO" id="GO:0015267">
    <property type="term" value="F:channel activity"/>
    <property type="evidence" value="ECO:0007669"/>
    <property type="project" value="UniProtKB-KW"/>
</dbReference>
<dbReference type="GO" id="GO:0004197">
    <property type="term" value="F:cysteine-type endopeptidase activity"/>
    <property type="evidence" value="ECO:0007669"/>
    <property type="project" value="UniProtKB-EC"/>
</dbReference>
<dbReference type="GO" id="GO:0003723">
    <property type="term" value="F:RNA binding"/>
    <property type="evidence" value="ECO:0007669"/>
    <property type="project" value="UniProtKB-KW"/>
</dbReference>
<dbReference type="GO" id="GO:0003724">
    <property type="term" value="F:RNA helicase activity"/>
    <property type="evidence" value="ECO:0007669"/>
    <property type="project" value="InterPro"/>
</dbReference>
<dbReference type="GO" id="GO:0003968">
    <property type="term" value="F:RNA-directed RNA polymerase activity"/>
    <property type="evidence" value="ECO:0007669"/>
    <property type="project" value="UniProtKB-KW"/>
</dbReference>
<dbReference type="GO" id="GO:0005198">
    <property type="term" value="F:structural molecule activity"/>
    <property type="evidence" value="ECO:0007669"/>
    <property type="project" value="InterPro"/>
</dbReference>
<dbReference type="GO" id="GO:0008270">
    <property type="term" value="F:zinc ion binding"/>
    <property type="evidence" value="ECO:0007669"/>
    <property type="project" value="UniProtKB-KW"/>
</dbReference>
<dbReference type="GO" id="GO:0006260">
    <property type="term" value="P:DNA replication"/>
    <property type="evidence" value="ECO:0007669"/>
    <property type="project" value="UniProtKB-KW"/>
</dbReference>
<dbReference type="GO" id="GO:0006351">
    <property type="term" value="P:DNA-templated transcription"/>
    <property type="evidence" value="ECO:0007669"/>
    <property type="project" value="InterPro"/>
</dbReference>
<dbReference type="GO" id="GO:0075509">
    <property type="term" value="P:endocytosis involved in viral entry into host cell"/>
    <property type="evidence" value="ECO:0007669"/>
    <property type="project" value="UniProtKB-KW"/>
</dbReference>
<dbReference type="GO" id="GO:0034220">
    <property type="term" value="P:monoatomic ion transmembrane transport"/>
    <property type="evidence" value="ECO:0007669"/>
    <property type="project" value="UniProtKB-KW"/>
</dbReference>
<dbReference type="GO" id="GO:0006508">
    <property type="term" value="P:proteolysis"/>
    <property type="evidence" value="ECO:0007669"/>
    <property type="project" value="UniProtKB-KW"/>
</dbReference>
<dbReference type="GO" id="GO:0044694">
    <property type="term" value="P:symbiont genome entry into host cell via pore formation in plasma membrane"/>
    <property type="evidence" value="ECO:0007669"/>
    <property type="project" value="UniProtKB-KW"/>
</dbReference>
<dbReference type="GO" id="GO:0039520">
    <property type="term" value="P:symbiont-mediated activation of host autophagy"/>
    <property type="evidence" value="ECO:0000250"/>
    <property type="project" value="UniProtKB"/>
</dbReference>
<dbReference type="GO" id="GO:0039540">
    <property type="term" value="P:symbiont-mediated suppression of host cytoplasmic pattern recognition receptor signaling pathway via inhibition of RIG-I activity"/>
    <property type="evidence" value="ECO:0007669"/>
    <property type="project" value="UniProtKB-KW"/>
</dbReference>
<dbReference type="GO" id="GO:0039522">
    <property type="term" value="P:symbiont-mediated suppression of host mRNA export from nucleus"/>
    <property type="evidence" value="ECO:0007669"/>
    <property type="project" value="UniProtKB-KW"/>
</dbReference>
<dbReference type="GO" id="GO:0039694">
    <property type="term" value="P:viral RNA genome replication"/>
    <property type="evidence" value="ECO:0007669"/>
    <property type="project" value="InterPro"/>
</dbReference>
<dbReference type="GO" id="GO:0019062">
    <property type="term" value="P:virion attachment to host cell"/>
    <property type="evidence" value="ECO:0007669"/>
    <property type="project" value="UniProtKB-KW"/>
</dbReference>
<dbReference type="CDD" id="cd23213">
    <property type="entry name" value="Enterovirus_RdRp"/>
    <property type="match status" value="1"/>
</dbReference>
<dbReference type="CDD" id="cd00205">
    <property type="entry name" value="rhv_like"/>
    <property type="match status" value="3"/>
</dbReference>
<dbReference type="FunFam" id="1.20.960.20:FF:000001">
    <property type="entry name" value="Genome polyprotein"/>
    <property type="match status" value="1"/>
</dbReference>
<dbReference type="FunFam" id="2.40.10.10:FF:000018">
    <property type="entry name" value="Genome polyprotein"/>
    <property type="match status" value="1"/>
</dbReference>
<dbReference type="FunFam" id="2.40.10.10:FF:000020">
    <property type="entry name" value="Genome polyprotein"/>
    <property type="match status" value="1"/>
</dbReference>
<dbReference type="FunFam" id="2.40.10.10:FF:000022">
    <property type="entry name" value="Genome polyprotein"/>
    <property type="match status" value="1"/>
</dbReference>
<dbReference type="FunFam" id="2.60.120.20:FF:000001">
    <property type="entry name" value="Genome polyprotein"/>
    <property type="match status" value="1"/>
</dbReference>
<dbReference type="FunFam" id="2.60.120.20:FF:000002">
    <property type="entry name" value="Genome polyprotein"/>
    <property type="match status" value="1"/>
</dbReference>
<dbReference type="FunFam" id="2.60.120.20:FF:000004">
    <property type="entry name" value="Genome polyprotein"/>
    <property type="match status" value="1"/>
</dbReference>
<dbReference type="FunFam" id="3.30.70.270:FF:000008">
    <property type="entry name" value="Genome polyprotein"/>
    <property type="match status" value="1"/>
</dbReference>
<dbReference type="FunFam" id="4.10.80.10:FF:000001">
    <property type="entry name" value="Genome polyprotein"/>
    <property type="match status" value="1"/>
</dbReference>
<dbReference type="FunFam" id="4.10.880.10:FF:000001">
    <property type="entry name" value="Genome polyprotein"/>
    <property type="match status" value="1"/>
</dbReference>
<dbReference type="FunFam" id="4.10.880.10:FF:000002">
    <property type="entry name" value="Genome polyprotein"/>
    <property type="match status" value="1"/>
</dbReference>
<dbReference type="Gene3D" id="1.20.960.20">
    <property type="match status" value="1"/>
</dbReference>
<dbReference type="Gene3D" id="2.60.120.20">
    <property type="match status" value="3"/>
</dbReference>
<dbReference type="Gene3D" id="3.30.70.270">
    <property type="match status" value="1"/>
</dbReference>
<dbReference type="Gene3D" id="4.10.80.10">
    <property type="entry name" value="Picornavirus coat protein VP4"/>
    <property type="match status" value="1"/>
</dbReference>
<dbReference type="Gene3D" id="6.10.20.20">
    <property type="entry name" value="Poliovirus 3A protein-like"/>
    <property type="match status" value="1"/>
</dbReference>
<dbReference type="Gene3D" id="4.10.880.10">
    <property type="entry name" value="Poliovirus 3D polymerase Domain 1 (Nucleotidyltransferase)"/>
    <property type="match status" value="2"/>
</dbReference>
<dbReference type="Gene3D" id="2.40.10.10">
    <property type="entry name" value="Trypsin-like serine proteases"/>
    <property type="match status" value="4"/>
</dbReference>
<dbReference type="InterPro" id="IPR003593">
    <property type="entry name" value="AAA+_ATPase"/>
</dbReference>
<dbReference type="InterPro" id="IPR043502">
    <property type="entry name" value="DNA/RNA_pol_sf"/>
</dbReference>
<dbReference type="InterPro" id="IPR000605">
    <property type="entry name" value="Helicase_SF3_ssDNA/RNA_vir"/>
</dbReference>
<dbReference type="InterPro" id="IPR014759">
    <property type="entry name" value="Helicase_SF3_ssRNA_vir"/>
</dbReference>
<dbReference type="InterPro" id="IPR027417">
    <property type="entry name" value="P-loop_NTPase"/>
</dbReference>
<dbReference type="InterPro" id="IPR014838">
    <property type="entry name" value="P3A"/>
</dbReference>
<dbReference type="InterPro" id="IPR036203">
    <property type="entry name" value="P3A_soluble_dom"/>
</dbReference>
<dbReference type="InterPro" id="IPR044067">
    <property type="entry name" value="PCV_3C_PRO"/>
</dbReference>
<dbReference type="InterPro" id="IPR000081">
    <property type="entry name" value="Peptidase_C3"/>
</dbReference>
<dbReference type="InterPro" id="IPR000199">
    <property type="entry name" value="Peptidase_C3A/C3B_picornavir"/>
</dbReference>
<dbReference type="InterPro" id="IPR009003">
    <property type="entry name" value="Peptidase_S1_PA"/>
</dbReference>
<dbReference type="InterPro" id="IPR043504">
    <property type="entry name" value="Peptidase_S1_PA_chymotrypsin"/>
</dbReference>
<dbReference type="InterPro" id="IPR003138">
    <property type="entry name" value="Pico_P1A"/>
</dbReference>
<dbReference type="InterPro" id="IPR036988">
    <property type="entry name" value="Pico_P1A_sf"/>
</dbReference>
<dbReference type="InterPro" id="IPR002527">
    <property type="entry name" value="Pico_P2B"/>
</dbReference>
<dbReference type="InterPro" id="IPR001676">
    <property type="entry name" value="Picornavirus_capsid"/>
</dbReference>
<dbReference type="InterPro" id="IPR043128">
    <property type="entry name" value="Rev_trsase/Diguanyl_cyclase"/>
</dbReference>
<dbReference type="InterPro" id="IPR033703">
    <property type="entry name" value="Rhv-like"/>
</dbReference>
<dbReference type="InterPro" id="IPR001205">
    <property type="entry name" value="RNA-dir_pol_C"/>
</dbReference>
<dbReference type="InterPro" id="IPR007094">
    <property type="entry name" value="RNA-dir_pol_PSvirus"/>
</dbReference>
<dbReference type="InterPro" id="IPR029053">
    <property type="entry name" value="Viral_coat"/>
</dbReference>
<dbReference type="Pfam" id="PF08727">
    <property type="entry name" value="P3A"/>
    <property type="match status" value="1"/>
</dbReference>
<dbReference type="Pfam" id="PF00548">
    <property type="entry name" value="Peptidase_C3"/>
    <property type="match status" value="1"/>
</dbReference>
<dbReference type="Pfam" id="PF02226">
    <property type="entry name" value="Pico_P1A"/>
    <property type="match status" value="1"/>
</dbReference>
<dbReference type="Pfam" id="PF00947">
    <property type="entry name" value="Pico_P2A"/>
    <property type="match status" value="1"/>
</dbReference>
<dbReference type="Pfam" id="PF01552">
    <property type="entry name" value="Pico_P2B"/>
    <property type="match status" value="1"/>
</dbReference>
<dbReference type="Pfam" id="PF00680">
    <property type="entry name" value="RdRP_1"/>
    <property type="match status" value="1"/>
</dbReference>
<dbReference type="Pfam" id="PF00073">
    <property type="entry name" value="Rhv"/>
    <property type="match status" value="3"/>
</dbReference>
<dbReference type="Pfam" id="PF00910">
    <property type="entry name" value="RNA_helicase"/>
    <property type="match status" value="1"/>
</dbReference>
<dbReference type="SMART" id="SM00382">
    <property type="entry name" value="AAA"/>
    <property type="match status" value="1"/>
</dbReference>
<dbReference type="SUPFAM" id="SSF56672">
    <property type="entry name" value="DNA/RNA polymerases"/>
    <property type="match status" value="1"/>
</dbReference>
<dbReference type="SUPFAM" id="SSF52540">
    <property type="entry name" value="P-loop containing nucleoside triphosphate hydrolases"/>
    <property type="match status" value="1"/>
</dbReference>
<dbReference type="SUPFAM" id="SSF88633">
    <property type="entry name" value="Positive stranded ssRNA viruses"/>
    <property type="match status" value="2"/>
</dbReference>
<dbReference type="SUPFAM" id="SSF89043">
    <property type="entry name" value="Soluble domain of poliovirus core protein 3a"/>
    <property type="match status" value="1"/>
</dbReference>
<dbReference type="SUPFAM" id="SSF50494">
    <property type="entry name" value="Trypsin-like serine proteases"/>
    <property type="match status" value="2"/>
</dbReference>
<dbReference type="PROSITE" id="PS51874">
    <property type="entry name" value="PCV_3C_PRO"/>
    <property type="match status" value="1"/>
</dbReference>
<dbReference type="PROSITE" id="PS50507">
    <property type="entry name" value="RDRP_SSRNA_POS"/>
    <property type="match status" value="1"/>
</dbReference>
<dbReference type="PROSITE" id="PS51218">
    <property type="entry name" value="SF3_HELICASE_2"/>
    <property type="match status" value="1"/>
</dbReference>
<comment type="function">
    <molecule>Capsid protein VP1</molecule>
    <text evidence="2">Forms an icosahedral capsid of pseudo T=3 symmetry with capsid proteins VP2 and VP3 (By similarity). The capsid is 300 Angstroms in diameter, composed of 60 copies of each capsid protein and enclosing the viral positive strand RNA genome (By similarity). Capsid protein VP1 mainly forms the vertices of the capsid (By similarity). Capsid protein VP1 interacts with host cell receptor to provide virion attachment to target host cells (By similarity). This attachment induces virion internalization (By similarity). Tyrosine kinases are probably involved in the entry process (By similarity). After binding to its receptor, the capsid undergoes conformational changes (By similarity). Capsid protein VP1 N-terminus (that contains an amphipathic alpha-helix) and capsid protein VP4 are externalized (By similarity). Together, they shape a pore in the host membrane through which viral genome is translocated to host cell cytoplasm (By similarity).</text>
</comment>
<comment type="function">
    <molecule>Capsid protein VP2</molecule>
    <text evidence="2">Forms an icosahedral capsid of pseudo T=3 symmetry with capsid proteins VP2 and VP3 (By similarity). The capsid is 300 Angstroms in diameter, composed of 60 copies of each capsid protein and enclosing the viral positive strand RNA genome (By similarity).</text>
</comment>
<comment type="function">
    <molecule>Capsid protein VP3</molecule>
    <text evidence="2">Forms an icosahedral capsid of pseudo T=3 symmetry with capsid proteins VP2 and VP3 (By similarity). The capsid is 300 Angstroms in diameter, composed of 60 copies of each capsid protein and enclosing the viral positive strand RNA genome (By similarity).</text>
</comment>
<comment type="function">
    <molecule>Capsid protein VP4</molecule>
    <text evidence="2">Lies on the inner surface of the capsid shell (By similarity). After binding to the host receptor, the capsid undergoes conformational changes (By similarity). Capsid protein VP4 is released, Capsid protein VP1 N-terminus is externalized, and together, they shape a pore in the host membrane through which the viral genome is translocated into the host cell cytoplasm (By similarity).</text>
</comment>
<comment type="function">
    <molecule>Capsid protein VP0</molecule>
    <text evidence="2">Component of immature procapsids, which is cleaved into capsid proteins VP4 and VP2 after maturation (By similarity). Allows the capsid to remain inactive before the maturation step (By similarity).</text>
</comment>
<comment type="function">
    <molecule>Protease 2A</molecule>
    <text evidence="2 3">Cysteine protease that cleaves viral polyprotein and specific host proteins (By similarity). It is responsible for the autocatalytic cleavage between the P1 and P2 regions, which is the first cleavage occurring in the polyprotein (By similarity). Also cleaves the host translation initiation factor EIF4G1, in order to shut down the capped cellular mRNA translation (By similarity). Inhibits the host nucleus-cytoplasm protein and RNA trafficking by cleaving host members of the nuclear pores (By similarity). Counteracts stress granule formation probably by antagonizing its assembly or promoting its dissassembly (By similarity).</text>
</comment>
<comment type="function">
    <molecule>Protein 2B</molecule>
    <text evidence="2">Plays an essential role in the virus replication cycle by acting as a viroporin. Creates a pore in the host endoplasmic reticulum and as a consequence releases Ca2+ in the cytoplasm of infected cell. In turn, high levels of cytoplasmic calcium may trigger membrane trafficking and transport of viral ER-associated proteins to viroplasms, sites of viral genome replication.</text>
</comment>
<comment type="function">
    <molecule>Protein 2C</molecule>
    <text evidence="2">Induces and associates with structural rearrangements of intracellular membranes. Displays RNA-binding, nucleotide binding and NTPase activities. May play a role in virion morphogenesis and viral RNA encapsidation by interacting with the capsid protein VP3.</text>
</comment>
<comment type="function">
    <molecule>Protein 3AB</molecule>
    <text evidence="2">Localizes the viral replication complex to the surface of membranous vesicles. Together with protein 3CD binds the Cis-Active RNA Element (CRE) which is involved in RNA synthesis initiation. Acts as a cofactor to stimulate the activity of 3D polymerase, maybe through a nucleid acid chaperone activity.</text>
</comment>
<comment type="function">
    <molecule>Protein 3A</molecule>
    <text evidence="2">Localizes the viral replication complex to the surface of membranous vesicles (By similarity). It inhibits host cell endoplasmic reticulum-to-Golgi apparatus transport and causes the disassembly of the Golgi complex, possibly through GBF1 interaction (By similarity). This would result in depletion of MHC, trail receptors and IFN receptors at the host cell surface (By similarity). Plays an essential role in viral RNA replication by recruiting ACBD3 and PI4KB at the viral replication sites, thereby allowing the formation of the rearranged membranous structures where viral replication takes place (By similarity).</text>
</comment>
<comment type="function">
    <molecule>Viral protein genome-linked</molecule>
    <text evidence="2">Acts as a primer for viral RNA replication and remains covalently bound to viral genomic RNA. VPg is uridylylated prior to priming replication into VPg-pUpU. The oriI viral genomic sequence may act as a template for this. The VPg-pUpU is then used as primer on the genomic RNA poly(A) by the RNA-dependent RNA polymerase to replicate the viral genome. During genome replication, the VPg-RNA linkage is removed by the host TDP2, thereby accelerating replication. During the late stage of the replication cycle, host TDP2 is excluded from sites of viral RNA synthesis and encapsidation, allowing for the generation of progeny virions.</text>
</comment>
<comment type="function">
    <molecule>Protein 3CD</molecule>
    <text evidence="2">Involved in the viral replication complex and viral polypeptide maturation. It exhibits protease activity with a specificity and catalytic efficiency that is different from protease 3C. Protein 3CD lacks polymerase activity. Protein 3CD binds to the 5'UTR of the viral genome.</text>
</comment>
<comment type="function">
    <molecule>RNA-directed RNA polymerase</molecule>
    <text evidence="2">Replicates the viral genomic RNA on the surface of intracellular membranes. May form linear arrays of subunits that propagate along a strong head-to-tail interaction called interface-I. Covalently attaches UMP to a tyrosine of VPg, which is used to prime RNA synthesis. The positive stranded RNA genome is first replicated at virus induced membranous vesicles, creating a dsRNA genomic replication form. This dsRNA is then used as template to synthesize positive stranded RNA genomes. ss(+)RNA genomes are either translated, replicated or encapsidated.</text>
</comment>
<comment type="function">
    <molecule>Protease 3C</molecule>
    <text evidence="2 4">Major viral protease that mediates proteolytic processing of the polyprotein (By similarity). Cleaves host EIF5B, contributing to host translation shutoff (By similarity). Also cleaves host PABPC1, contributing to host translation shutoff (By similarity). Cleaves host NLRP1, triggers host N-glycine-mediated degradation of the autoinhibitory NLRP1 N-terminal fragment (By similarity).</text>
</comment>
<comment type="catalytic activity">
    <molecule>Protein 2C</molecule>
    <reaction evidence="2">
        <text>a ribonucleoside 5'-triphosphate + H2O = a ribonucleoside 5'-diphosphate + phosphate + H(+)</text>
        <dbReference type="Rhea" id="RHEA:23680"/>
        <dbReference type="ChEBI" id="CHEBI:15377"/>
        <dbReference type="ChEBI" id="CHEBI:15378"/>
        <dbReference type="ChEBI" id="CHEBI:43474"/>
        <dbReference type="ChEBI" id="CHEBI:57930"/>
        <dbReference type="ChEBI" id="CHEBI:61557"/>
        <dbReference type="EC" id="3.6.1.15"/>
    </reaction>
</comment>
<comment type="catalytic activity">
    <molecule>Protease 2A</molecule>
    <reaction evidence="2">
        <text>Selective cleavage of Tyr-|-Gly bond in the picornavirus polyprotein.</text>
        <dbReference type="EC" id="3.4.22.29"/>
    </reaction>
</comment>
<comment type="catalytic activity">
    <molecule>RNA-directed RNA polymerase</molecule>
    <reaction evidence="10">
        <text>RNA(n) + a ribonucleoside 5'-triphosphate = RNA(n+1) + diphosphate</text>
        <dbReference type="Rhea" id="RHEA:21248"/>
        <dbReference type="Rhea" id="RHEA-COMP:14527"/>
        <dbReference type="Rhea" id="RHEA-COMP:17342"/>
        <dbReference type="ChEBI" id="CHEBI:33019"/>
        <dbReference type="ChEBI" id="CHEBI:61557"/>
        <dbReference type="ChEBI" id="CHEBI:140395"/>
        <dbReference type="EC" id="2.7.7.48"/>
    </reaction>
</comment>
<comment type="catalytic activity">
    <molecule>Protease 3C</molecule>
    <reaction evidence="12">
        <text>Selective cleavage of Gln-|-Gly bond in the poliovirus polyprotein. In other picornavirus reactions Glu may be substituted for Gln, and Ser or Thr for Gly.</text>
        <dbReference type="EC" id="3.4.22.28"/>
    </reaction>
</comment>
<comment type="cofactor">
    <molecule>RNA-directed RNA polymerase</molecule>
    <cofactor evidence="2">
        <name>Mg(2+)</name>
        <dbReference type="ChEBI" id="CHEBI:18420"/>
    </cofactor>
    <text evidence="2 5">Binds 2 magnesium ions that constitute a dinuclear catalytic metal center (By similarity). The magnesium ions are not prebound but only present for catalysis (By similarity). Requires the presence of 3CDpro or 3CPro (By similarity).</text>
</comment>
<comment type="activity regulation">
    <molecule>RNA-directed RNA polymerase</molecule>
    <text evidence="2">Replication or transcription is subject to high level of random mutations by the nucleotide analog ribavirin.</text>
</comment>
<comment type="subunit">
    <molecule>Capsid protein VP0</molecule>
    <text evidence="2">Interacts with capsid protein VP1 and capsid protein VP3 to form heterotrimeric protomers.</text>
</comment>
<comment type="subunit">
    <molecule>Capsid protein VP1</molecule>
    <text evidence="2">Interacts with capsid protein VP0, and capsid protein VP3 to form heterotrimeric protomers (By similarity). Five protomers subsequently associate to form pentamers which serve as building blocks for the capsid (By similarity). Interacts with capsid protein VP2, capsid protein VP3 and capsid protein VP4 following cleavage of capsid protein VP0 (By similarity).</text>
</comment>
<comment type="subunit">
    <molecule>Capsid protein VP2</molecule>
    <text evidence="2 13">Interacts with capsid protein VP1 and capsid protein VP3 in the mature capsid (By similarity). Interacts with host CD55; this interaction promotes virus attachment to the host cell and subsequent internalization (PubMed:7517044).</text>
</comment>
<comment type="subunit">
    <molecule>Capsid protein VP3</molecule>
    <text evidence="2 13">Interacts with capsid protein VP0 and capsid protein VP1 to form heterotrimeric protomers (By similarity). Five protomers subsequently associate to form pentamers which serve as building blocks for the capsid (By similarity). Interacts with capsid protein VP4 in the mature capsid (By similarity). Interacts with protein 2C; this interaction may be important for virion morphogenesis (By similarity). Interacts with host CD55; this interaction promotes virus attachment to the host cell and subsequent internalization (PubMed:7517044).</text>
</comment>
<comment type="subunit">
    <molecule>Capsid protein VP4</molecule>
    <text evidence="2">Interacts with capsid protein VP1 and capsid protein VP3.</text>
</comment>
<comment type="subunit">
    <molecule>Protease 2A</molecule>
    <text evidence="6">Homodimer.</text>
</comment>
<comment type="subunit">
    <molecule>Protein 2C</molecule>
    <text evidence="2">Homohexamer; forms a hexameric ring structure with 6-fold symmetry characteristic of AAA+ ATPases (By similarity). Interacts (via N-terminus) with host RTN3 (via reticulon domain); this interaction is important for viral replication (By similarity). Interacts with capsid protein VP3; this interaction may be important for virion morphogenesis (By similarity).</text>
</comment>
<comment type="subunit">
    <molecule>Protein 3AB</molecule>
    <text evidence="2">Interacts with protein 3CD.</text>
</comment>
<comment type="subunit">
    <molecule>Protein 3A</molecule>
    <text evidence="2">Homodimer (By similarity). Interacts with host GBF1 (By similarity). Interacts (via GOLD domain) with host ACBD3 (via GOLD domain); this interaction allows the formation of a viral protein 3A/ACBD3 heterotetramer with a 2:2 stoichiometry, which will stimulate the recruitment of host PI4KB in order to synthesize PI4P at the viral RNA replication sites (By similarity).</text>
</comment>
<comment type="subunit">
    <molecule>Viral protein genome-linked</molecule>
    <text evidence="2">Interacts with RNA-directed RNA polymerase.</text>
</comment>
<comment type="subunit">
    <molecule>Protein 3CD</molecule>
    <text evidence="2">Interacts with protein 3AB and with RNA-directed RNA polymerase.</text>
</comment>
<comment type="subunit">
    <molecule>RNA-directed RNA polymerase</molecule>
    <text evidence="2">Interacts with Viral protein genome-linked and with protein 3CD.</text>
</comment>
<comment type="subcellular location">
    <molecule>Capsid protein VP0</molecule>
    <subcellularLocation>
        <location>Virion</location>
    </subcellularLocation>
    <subcellularLocation>
        <location evidence="15">Host cytoplasm</location>
    </subcellularLocation>
</comment>
<comment type="subcellular location">
    <molecule>Capsid protein VP4</molecule>
    <subcellularLocation>
        <location>Virion</location>
    </subcellularLocation>
</comment>
<comment type="subcellular location">
    <molecule>Capsid protein VP2</molecule>
    <subcellularLocation>
        <location evidence="2">Virion</location>
    </subcellularLocation>
    <subcellularLocation>
        <location evidence="15">Host cytoplasm</location>
    </subcellularLocation>
</comment>
<comment type="subcellular location">
    <molecule>Capsid protein VP3</molecule>
    <subcellularLocation>
        <location evidence="2">Virion</location>
    </subcellularLocation>
    <subcellularLocation>
        <location evidence="15">Host cytoplasm</location>
    </subcellularLocation>
</comment>
<comment type="subcellular location">
    <molecule>Capsid protein VP1</molecule>
    <subcellularLocation>
        <location evidence="2">Virion</location>
    </subcellularLocation>
    <subcellularLocation>
        <location evidence="15">Host cytoplasm</location>
    </subcellularLocation>
</comment>
<comment type="subcellular location">
    <molecule>Protein 2B</molecule>
    <subcellularLocation>
        <location evidence="15">Host cytoplasmic vesicle membrane</location>
        <topology evidence="15">Peripheral membrane protein</topology>
        <orientation evidence="15">Cytoplasmic side</orientation>
    </subcellularLocation>
    <text>Probably localizes to the surface of intracellular membrane vesicles that are induced after virus infection as the site for viral RNA replication. These vesicles are derived from the endoplasmic reticulum.</text>
</comment>
<comment type="subcellular location">
    <molecule>Protein 2C</molecule>
    <subcellularLocation>
        <location evidence="15">Host cytoplasmic vesicle membrane</location>
        <topology evidence="15">Peripheral membrane protein</topology>
        <orientation evidence="15">Cytoplasmic side</orientation>
    </subcellularLocation>
    <text>Probably localizes to the surface of intracellular membrane vesicles that are induced after virus infection as the site for viral RNA replication. These vesicles are derived from the endoplasmic reticulum.</text>
</comment>
<comment type="subcellular location">
    <molecule>Protein 3A</molecule>
    <subcellularLocation>
        <location evidence="15">Host cytoplasmic vesicle membrane</location>
        <topology evidence="15">Peripheral membrane protein</topology>
        <orientation evidence="15">Cytoplasmic side</orientation>
    </subcellularLocation>
    <text>Probably localizes to the surface of intracellular membrane vesicles that are induced after virus infection as the site for viral RNA replication. These vesicles are derived from the endoplasmic reticulum.</text>
</comment>
<comment type="subcellular location">
    <molecule>Protein 3AB</molecule>
    <subcellularLocation>
        <location evidence="15">Host cytoplasmic vesicle membrane</location>
        <topology evidence="15">Peripheral membrane protein</topology>
        <orientation evidence="15">Cytoplasmic side</orientation>
    </subcellularLocation>
    <text>Probably localizes to the surface of intracellular membrane vesicles that are induced after virus infection as the site for viral RNA replication. These vesicles are derived from the endoplasmic reticulum.</text>
</comment>
<comment type="subcellular location">
    <molecule>Viral protein genome-linked</molecule>
    <subcellularLocation>
        <location evidence="2">Virion</location>
    </subcellularLocation>
    <subcellularLocation>
        <location evidence="7">Host cytoplasm</location>
    </subcellularLocation>
</comment>
<comment type="subcellular location">
    <molecule>Protease 3C</molecule>
    <subcellularLocation>
        <location>Host cytoplasm</location>
    </subcellularLocation>
</comment>
<comment type="subcellular location">
    <molecule>Protein 3CD</molecule>
    <subcellularLocation>
        <location evidence="2">Host nucleus</location>
    </subcellularLocation>
    <subcellularLocation>
        <location evidence="2">Host cytoplasm</location>
    </subcellularLocation>
    <subcellularLocation>
        <location evidence="15">Host cytoplasmic vesicle membrane</location>
        <topology evidence="15">Peripheral membrane protein</topology>
        <orientation evidence="15">Cytoplasmic side</orientation>
    </subcellularLocation>
    <text>Probably localizes to the surface of intracellular membrane vesicles that are induced after virus infection as the site for viral RNA replication. These vesicles are derived from the endoplasmic reticulum.</text>
</comment>
<comment type="subcellular location">
    <molecule>RNA-directed RNA polymerase</molecule>
    <subcellularLocation>
        <location evidence="15">Host cytoplasmic vesicle membrane</location>
        <topology evidence="15">Peripheral membrane protein</topology>
        <orientation evidence="15">Cytoplasmic side</orientation>
    </subcellularLocation>
    <text>Probably localizes to the surface of intracellular membrane vesicles that are induced after virus infection as the site for viral RNA replication. These vesicles are derived from the endoplasmic reticulum.</text>
</comment>
<comment type="domain">
    <molecule>Protein 2C</molecule>
    <text evidence="1 2">The N-terminus has membrane-binding (By similarity). The N-terminus also displays RNA-binding properties (By similarity). The N-terminus is involved in oligomerization (By similarity). The central part contains an ATPase domain and a degenerate C4-type zinc-finger with only 3 cysteines (By similarity). The C-terminus is involved in RNA-binding (By similarity). The extreme C-terminus contains a region involved in oligomerization (By similarity).</text>
</comment>
<comment type="PTM">
    <molecule>Genome polyprotein</molecule>
    <text evidence="2">Specific enzymatic cleavages in vivo by the viral proteases yield processing intermediates and the mature proteins.</text>
</comment>
<comment type="PTM">
    <molecule>Capsid protein VP0</molecule>
    <text evidence="2">Myristoylation is required for the formation of pentamers during virus assembly. Further assembly of 12 pentamers and a molecule of genomic RNA generates the provirion.</text>
</comment>
<comment type="PTM">
    <molecule>Capsid protein VP0</molecule>
    <text evidence="2">During virion maturation, immature virions are rendered infectious following cleavage of VP0 into VP4 and VP2. This maturation seems to be an autocatalytic event triggered by the presence of RNA in the capsid and it is followed by a conformational change infectious virion.</text>
</comment>
<comment type="PTM">
    <molecule>Capsid protein VP4</molecule>
    <text evidence="2">Myristoylation is required during RNA encapsidation and formation of the mature virus particle.</text>
</comment>
<comment type="PTM">
    <molecule>Viral protein genome-linked</molecule>
    <text evidence="2">VPg is uridylylated by the polymerase into VPg-pUpU. This acts as a nucleotide-peptide primer for the genomic RNA replication.</text>
</comment>
<comment type="similarity">
    <text evidence="15">Belongs to the picornaviruses polyprotein family.</text>
</comment>
<proteinExistence type="evidence at protein level"/>
<sequence>MGAQVSTQKTGAHETGLSASGNSIIHYTNINYYKDAASNSANRQDFTQDPGKFTEPVKDIMIKSMPALNSPTAEECGYSDRVRSITLGNSTITTQECANVVVGYGTWPDYLHDDEATAEDQPTQPDVATCRFYTLESIQWQKTSDGWWWKFPEALKDMGLFGQNMHYHYLGRSGYTIHVQCNASKFHQGCLLVVCVPEAEMGCATVANEVNAAALSSGETAKHFAKTGATGTHTVQSIVTNAGMGVGVGNLTIFPHQWINLRTNNSATIVMPYINSVPMDNMFRHYNFTLMIIPFVPLDFTAEASTYVPITVTVAPMCAEYNGLRLASHQGLPTMNTPGSNQFLTSDDFQSPSAMPQFDVTPELRIPGEVKNLMEIAEVDSVVPVNNTQDSVYNMDVYKIPVSGGNQLSTQVFGFQMQPGLNSVFKRTLLGEILNYYAHWSGSVKLTFVFCGSAMALAKFLLAYSPPGADPPKSRKEAMLGTHVIWDIGLQSSCVLCVPWISQTHYRLVQQDEYTSAGYVTCWYQTSLVVPPGAPATCGVLCLASACNDFSVRMLRDTPFIEQKQLLQGDVEEAVNRAVARVADTLPTGPRNSESIPALTAAETGHTSQVVPGDTMQTRHVKNYHSRTESSVENFLCRAACVYITKYKTKDSDPVQRYANWRINTRQMVQLRRKFELFTYLRFDMEVTFVITSSQDDGTQLAQDMPVLTHQVMYIPPGGPVPNSVTDFAWQSSTNPSIFWTEGNAPARMSIPFISIGNAYSNFYDGWSHFTQDGVYGFNSLNNMGSIYIRHVNEQSPYAITSTVRVYFKPKHVRAWVPRPPRLCAYEKSSNVNFKPTDVTTSRTSITEVPSLRPSVVNTGAFGQQSGAAYVGNYRVVNRHLATHVDWQNCVWEDYNRDLLVSTTTAHGCDTIARCQCTTGVYFCASRNKHYPVSFEGPGLVEVQESEYYPRRYQSHVLLAAGFSEPGDCGGILRCEHGVIGLVTMGGEGVVGFADVRDLLWLEDDAMEQGVKDYVEQLGNAFGSGFTNQICEQVNLLKESLVGHDSILEKSLKALVKIISALVIVVRNHDDLITVTATLALIGCTSSPWRWLKHKVSQYYGIPMAERQSNGWLKKFTEMTNACKGMEWIAIKIQKFIEWLKLKILPEVKEKHEFLNRLKQLPLLESQIATIEQSAPSQSDQEQLFSNVQYFAHYCRKYAPLYAAEAKRVFSLEKKMSNYIQFKSKCRIEPVCLLLHGSPGAGKSVATSLIGRSLAEKLNSSVYSLPPDPDHFDGYKQQAVVIMDDLCQNPDGKDVSLFCQMVSSVDFVPPMAALEEKGILFTSPFVLASTNAGSINAPTVSDSRALARRFHFDMNIEVISMYSQNGKINMPMSVKTCDEECCPVNFKRCCPLVCGKAIQFIDRRTQVRYSLDMLVTEMFREYNHRHSVGATLEALFQGPPVIREIKISVAPETPPPPAIADLLKSVDSEAVREYCKEKGWLVPEVNSTLQIEKHVSRAFICLQALTTFVSVAGIIYIIYKLFAGFQGAYTGMPNQKPKVPTLRQAKVQGPAFEFAVAMMKRNASTVKTEYGEFTMLGIYDRWAVLPHHAKPGPTILMNDQEIGVLDAKELVDKDGTNLELTLLKLNRNEKFRDIRGFLAREEAEVNEAVLAINTSKFPNMYIPVGQVTDYGFLNLGGTPTKRMLMYNFPTRAGQCGGVLMSTGKVLGIHVGGNGHQGFSAALLRHYFNEEQGEIEFIESSKDAGFPVINTPSKTKLEPSVFHQVFEGNKEPAVLRNGDPRLKVNFEEAIFSKYIGNINTHVDEYMLEAVDHYAGQLATLDISTEPMKLEDAVYGTEGLEALDLTTSAGYPYVAIGIKKRDILSKKTKDLTKLKECMDKYGLNLPMVTYVKDELRSSEKVAKGKSRLIEASSLNDSVAMRQTFGNLYKTFHLNPGIVTGSAVGCDPDLFWSKIPVMLDGHLIAFDYSGYDASLSPVWFACLKLLLEKLGYTHRETNYIDYLCNSHHLYRDKHYFVRGGMPSGCSGTSIFNSMINNIIIRTLMLKVYKGIDLDQFRMIAYGDDVIASYPWPIDASLLAEAGKGYGLIMTPADKGECFNEVTWTNVTFLKRYFRADEQYPFLVHPVMPMKDIHESIRWTKDPKNTQDHVRSLCLLAWHNGEQEYEEFIRKIRSVPVGRCLTLPAFSTLRRKWLDSF</sequence>
<name>POLG_EC12T</name>
<organism>
    <name type="scientific">Echovirus 12 (strain Travis)</name>
    <dbReference type="NCBI Taxonomy" id="103909"/>
    <lineage>
        <taxon>Viruses</taxon>
        <taxon>Riboviria</taxon>
        <taxon>Orthornavirae</taxon>
        <taxon>Pisuviricota</taxon>
        <taxon>Pisoniviricetes</taxon>
        <taxon>Picornavirales</taxon>
        <taxon>Picornaviridae</taxon>
        <taxon>Ensavirinae</taxon>
        <taxon>Enterovirus</taxon>
        <taxon>Enterovirus B</taxon>
    </lineage>
</organism>
<evidence type="ECO:0000250" key="1">
    <source>
        <dbReference type="UniProtKB" id="B9VUU3"/>
    </source>
</evidence>
<evidence type="ECO:0000250" key="2">
    <source>
        <dbReference type="UniProtKB" id="P03300"/>
    </source>
</evidence>
<evidence type="ECO:0000250" key="3">
    <source>
        <dbReference type="UniProtKB" id="P03301"/>
    </source>
</evidence>
<evidence type="ECO:0000250" key="4">
    <source>
        <dbReference type="UniProtKB" id="P03303"/>
    </source>
</evidence>
<evidence type="ECO:0000250" key="5">
    <source>
        <dbReference type="UniProtKB" id="P03313"/>
    </source>
</evidence>
<evidence type="ECO:0000250" key="6">
    <source>
        <dbReference type="UniProtKB" id="P04936"/>
    </source>
</evidence>
<evidence type="ECO:0000250" key="7">
    <source>
        <dbReference type="UniProtKB" id="Q66478"/>
    </source>
</evidence>
<evidence type="ECO:0000250" key="8">
    <source>
        <dbReference type="UniProtKB" id="Q9QF31"/>
    </source>
</evidence>
<evidence type="ECO:0000255" key="9"/>
<evidence type="ECO:0000255" key="10">
    <source>
        <dbReference type="PROSITE-ProRule" id="PRU00539"/>
    </source>
</evidence>
<evidence type="ECO:0000255" key="11">
    <source>
        <dbReference type="PROSITE-ProRule" id="PRU00551"/>
    </source>
</evidence>
<evidence type="ECO:0000255" key="12">
    <source>
        <dbReference type="PROSITE-ProRule" id="PRU01222"/>
    </source>
</evidence>
<evidence type="ECO:0000269" key="13">
    <source>
    </source>
</evidence>
<evidence type="ECO:0000269" key="14">
    <source>
    </source>
</evidence>
<evidence type="ECO:0000305" key="15"/>
<accession>Q66575</accession>
<accession>Q66576</accession>
<organismHost>
    <name type="scientific">Homo sapiens</name>
    <name type="common">Human</name>
    <dbReference type="NCBI Taxonomy" id="9606"/>
</organismHost>
<protein>
    <recommendedName>
        <fullName>Genome polyprotein</fullName>
    </recommendedName>
    <component>
        <recommendedName>
            <fullName>P1</fullName>
        </recommendedName>
    </component>
    <component>
        <recommendedName>
            <fullName>Capsid protein VP0</fullName>
        </recommendedName>
        <alternativeName>
            <fullName>VP4-VP2</fullName>
        </alternativeName>
    </component>
    <component>
        <recommendedName>
            <fullName>Capsid protein VP4</fullName>
        </recommendedName>
        <alternativeName>
            <fullName>P1A</fullName>
        </alternativeName>
        <alternativeName>
            <fullName>Virion protein 4</fullName>
        </alternativeName>
    </component>
    <component>
        <recommendedName>
            <fullName>Capsid protein VP2</fullName>
        </recommendedName>
        <alternativeName>
            <fullName>P1B</fullName>
        </alternativeName>
        <alternativeName>
            <fullName>Virion protein 2</fullName>
        </alternativeName>
    </component>
    <component>
        <recommendedName>
            <fullName>Capsid protein VP3</fullName>
        </recommendedName>
        <alternativeName>
            <fullName>P1C</fullName>
        </alternativeName>
        <alternativeName>
            <fullName>Virion protein 3</fullName>
        </alternativeName>
    </component>
    <component>
        <recommendedName>
            <fullName>Capsid protein VP1</fullName>
        </recommendedName>
        <alternativeName>
            <fullName>P1D</fullName>
        </alternativeName>
        <alternativeName>
            <fullName>Virion protein 1</fullName>
        </alternativeName>
    </component>
    <component>
        <recommendedName>
            <fullName>P2</fullName>
        </recommendedName>
    </component>
    <component>
        <recommendedName>
            <fullName>Protease 2A</fullName>
            <shortName>P2A</shortName>
            <ecNumber evidence="2">3.4.22.29</ecNumber>
        </recommendedName>
        <alternativeName>
            <fullName>Picornain 2A</fullName>
        </alternativeName>
        <alternativeName>
            <fullName>Protein 2A</fullName>
        </alternativeName>
    </component>
    <component>
        <recommendedName>
            <fullName>Protein 2B</fullName>
            <shortName>P2B</shortName>
        </recommendedName>
    </component>
    <component>
        <recommendedName>
            <fullName>Protein 2C</fullName>
            <shortName>P2C</shortName>
            <ecNumber evidence="2">3.6.1.15</ecNumber>
        </recommendedName>
    </component>
    <component>
        <recommendedName>
            <fullName>P3</fullName>
        </recommendedName>
    </component>
    <component>
        <recommendedName>
            <fullName>Protein 3AB</fullName>
        </recommendedName>
    </component>
    <component>
        <recommendedName>
            <fullName>Protein 3A</fullName>
            <shortName>P3A</shortName>
        </recommendedName>
    </component>
    <component>
        <recommendedName>
            <fullName>Viral protein genome-linked</fullName>
            <shortName>VPg</shortName>
        </recommendedName>
        <alternativeName>
            <fullName>Protein 3B</fullName>
            <shortName>P3B</shortName>
        </alternativeName>
    </component>
    <component>
        <recommendedName>
            <fullName>Protein 3CD</fullName>
            <ecNumber>3.4.22.28</ecNumber>
        </recommendedName>
    </component>
    <component>
        <recommendedName>
            <fullName evidence="12">Protease 3C</fullName>
            <ecNumber evidence="12">3.4.22.28</ecNumber>
        </recommendedName>
        <alternativeName>
            <fullName evidence="12">Picornain 3C</fullName>
            <shortName evidence="12">P3C</shortName>
        </alternativeName>
    </component>
    <component>
        <recommendedName>
            <fullName evidence="10">RNA-directed RNA polymerase</fullName>
            <shortName>RdRp</shortName>
            <ecNumber evidence="10">2.7.7.48</ecNumber>
        </recommendedName>
        <alternativeName>
            <fullName>3D polymerase</fullName>
            <shortName>3Dpol</shortName>
        </alternativeName>
        <alternativeName>
            <fullName>Protein 3D</fullName>
            <shortName>3D</shortName>
        </alternativeName>
    </component>
</protein>
<reference key="1">
    <citation type="journal article" date="1995" name="J. Virol.">
        <title>Infectious cDNA clones of echovirus 12 and a variant resistant against the uncoating inhibitor rhodanine differ in seven amino acids.</title>
        <authorList>
            <person name="Kraus W."/>
            <person name="Zimmermann H."/>
            <person name="Zimmermann A."/>
            <person name="Eggers H.J."/>
            <person name="Nelsen-Salz B."/>
        </authorList>
    </citation>
    <scope>NUCLEOTIDE SEQUENCE [GENOMIC RNA]</scope>
    <scope>VARIANTS RHODANINE-RESISTANT TYR-223; SER-228; MET-376; CYS-643; ALA-669; ALA-725 AND ARG-2094</scope>
    <source>
        <strain>Wild-type</strain>
    </source>
</reference>
<reference key="2">
    <citation type="journal article" date="1994" name="Proc. Natl. Acad. Sci. U.S.A.">
        <title>Decay-accelerating factor (CD55), a glycosylphosphatidylinositol-anchored complement regulatory protein, is a receptor for several echoviruses.</title>
        <authorList>
            <person name="Bergelson J.M."/>
            <person name="Chan M."/>
            <person name="Solomon K.R."/>
            <person name="St John N.F."/>
            <person name="Lin H."/>
            <person name="Finberg R.W."/>
        </authorList>
    </citation>
    <scope>INTERACTION WITH HOST CD55 (CAPSID PROTEIN VP2)</scope>
    <scope>INTERACTION WITH HOST CD55 (CAPSID PROTEIN VP3)</scope>
</reference>
<feature type="initiator methionine" description="Removed; by host" evidence="2">
    <location>
        <position position="1"/>
    </location>
</feature>
<feature type="chain" id="PRO_0000426446" description="Genome polyprotein">
    <location>
        <begin position="2"/>
        <end position="2193"/>
    </location>
</feature>
<feature type="chain" id="PRO_0000426447" description="P1">
    <location>
        <begin position="2"/>
        <end position="859"/>
    </location>
</feature>
<feature type="chain" id="PRO_0000426448" description="Capsid protein VP0">
    <location>
        <begin position="2"/>
        <end position="330"/>
    </location>
</feature>
<feature type="chain" id="PRO_0000426449" description="Capsid protein VP4">
    <location>
        <begin position="2"/>
        <end position="69"/>
    </location>
</feature>
<feature type="chain" id="PRO_0000426450" description="Capsid protein VP2">
    <location>
        <begin position="70"/>
        <end position="330"/>
    </location>
</feature>
<feature type="chain" id="PRO_0000426451" description="Capsid protein VP3">
    <location>
        <begin position="331"/>
        <end position="568"/>
    </location>
</feature>
<feature type="chain" id="PRO_0000426452" description="Capsid protein VP1">
    <location>
        <begin position="569"/>
        <end position="859"/>
    </location>
</feature>
<feature type="chain" id="PRO_0000426453" description="P2">
    <location>
        <begin position="860"/>
        <end position="1437"/>
    </location>
</feature>
<feature type="chain" id="PRO_0000426454" description="Protease 2A">
    <location>
        <begin position="860"/>
        <end position="1009"/>
    </location>
</feature>
<feature type="chain" id="PRO_0000039719" description="Protein 2B">
    <location>
        <begin position="1010"/>
        <end position="1108"/>
    </location>
</feature>
<feature type="chain" id="PRO_0000039720" description="Protein 2C">
    <location>
        <begin position="1109"/>
        <end position="1437"/>
    </location>
</feature>
<feature type="chain" id="PRO_0000426455" description="P3">
    <location>
        <begin position="1438"/>
        <end position="2193"/>
    </location>
</feature>
<feature type="chain" id="PRO_0000426456" description="Protein 3AB">
    <location>
        <begin position="1438"/>
        <end position="1548"/>
    </location>
</feature>
<feature type="chain" id="PRO_0000039721" description="Protein 3A">
    <location>
        <begin position="1438"/>
        <end position="1526"/>
    </location>
</feature>
<feature type="chain" id="PRO_0000426457" description="Viral protein genome-linked">
    <location>
        <begin position="1527"/>
        <end position="1548"/>
    </location>
</feature>
<feature type="chain" id="PRO_0000426458" description="Protein 3CD">
    <location>
        <begin position="1549"/>
        <end position="2193"/>
    </location>
</feature>
<feature type="chain" id="PRO_0000426459" description="Protease 3C">
    <location>
        <begin position="1549"/>
        <end position="1731"/>
    </location>
</feature>
<feature type="chain" id="PRO_0000426460" description="RNA-directed RNA polymerase">
    <location>
        <begin position="1732"/>
        <end position="2193"/>
    </location>
</feature>
<feature type="topological domain" description="Cytoplasmic" evidence="9">
    <location>
        <begin position="2"/>
        <end position="1503"/>
    </location>
</feature>
<feature type="intramembrane region" evidence="9">
    <location>
        <begin position="1504"/>
        <end position="1519"/>
    </location>
</feature>
<feature type="topological domain" description="Cytoplasmic" evidence="9">
    <location>
        <begin position="1520"/>
        <end position="2193"/>
    </location>
</feature>
<feature type="domain" description="SF3 helicase" evidence="11">
    <location>
        <begin position="1213"/>
        <end position="1369"/>
    </location>
</feature>
<feature type="domain" description="Peptidase C3" evidence="12">
    <location>
        <begin position="1549"/>
        <end position="1727"/>
    </location>
</feature>
<feature type="domain" description="RdRp catalytic" evidence="10">
    <location>
        <begin position="1958"/>
        <end position="2074"/>
    </location>
</feature>
<feature type="zinc finger region" description="C4-type; degenerate" evidence="1">
    <location>
        <begin position="1377"/>
        <end position="1394"/>
    </location>
</feature>
<feature type="region of interest" description="Amphipathic alpha-helix" evidence="9">
    <location>
        <begin position="565"/>
        <end position="582"/>
    </location>
</feature>
<feature type="region of interest" description="Oligomerization" evidence="2">
    <location>
        <begin position="1109"/>
        <end position="1247"/>
    </location>
</feature>
<feature type="region of interest" description="Membrane-binding" evidence="2">
    <location>
        <begin position="1109"/>
        <end position="1181"/>
    </location>
</feature>
<feature type="region of interest" description="RNA-binding" evidence="2">
    <location>
        <begin position="1130"/>
        <end position="1134"/>
    </location>
</feature>
<feature type="region of interest" description="RNA-binding" evidence="2">
    <location>
        <begin position="1421"/>
        <end position="1428"/>
    </location>
</feature>
<feature type="region of interest" description="Oligomerization" evidence="2">
    <location>
        <begin position="1432"/>
        <end position="1437"/>
    </location>
</feature>
<feature type="active site" description="For protease 2A activity" evidence="2">
    <location>
        <position position="880"/>
    </location>
</feature>
<feature type="active site" description="For protease 2A activity" evidence="2">
    <location>
        <position position="898"/>
    </location>
</feature>
<feature type="active site" description="For protease 2A activity" evidence="2">
    <location>
        <position position="969"/>
    </location>
</feature>
<feature type="active site" description="For protease 3C activity" evidence="12">
    <location>
        <position position="1588"/>
    </location>
</feature>
<feature type="active site" description="For protease 3C activity" evidence="12">
    <location>
        <position position="1619"/>
    </location>
</feature>
<feature type="active site" description="For protease 3C activity" evidence="12">
    <location>
        <position position="1695"/>
    </location>
</feature>
<feature type="binding site" evidence="8">
    <location>
        <position position="915"/>
    </location>
    <ligand>
        <name>Zn(2+)</name>
        <dbReference type="ChEBI" id="CHEBI:29105"/>
        <label>1</label>
        <note>structural</note>
    </ligand>
</feature>
<feature type="binding site" evidence="8">
    <location>
        <position position="917"/>
    </location>
    <ligand>
        <name>Zn(2+)</name>
        <dbReference type="ChEBI" id="CHEBI:29105"/>
        <label>1</label>
        <note>structural</note>
    </ligand>
</feature>
<feature type="binding site" evidence="8">
    <location>
        <position position="975"/>
    </location>
    <ligand>
        <name>Zn(2+)</name>
        <dbReference type="ChEBI" id="CHEBI:29105"/>
        <label>1</label>
        <note>structural</note>
    </ligand>
</feature>
<feature type="binding site" evidence="8">
    <location>
        <position position="977"/>
    </location>
    <ligand>
        <name>Zn(2+)</name>
        <dbReference type="ChEBI" id="CHEBI:29105"/>
        <label>1</label>
        <note>structural</note>
    </ligand>
</feature>
<feature type="binding site" evidence="1">
    <location>
        <position position="1377"/>
    </location>
    <ligand>
        <name>Zn(2+)</name>
        <dbReference type="ChEBI" id="CHEBI:29105"/>
        <label>2</label>
    </ligand>
</feature>
<feature type="binding site" evidence="1">
    <location>
        <position position="1389"/>
    </location>
    <ligand>
        <name>Zn(2+)</name>
        <dbReference type="ChEBI" id="CHEBI:29105"/>
        <label>2</label>
    </ligand>
</feature>
<feature type="binding site" evidence="1">
    <location>
        <position position="1394"/>
    </location>
    <ligand>
        <name>Zn(2+)</name>
        <dbReference type="ChEBI" id="CHEBI:29105"/>
        <label>2</label>
    </ligand>
</feature>
<feature type="binding site" evidence="2">
    <location>
        <position position="1964"/>
    </location>
    <ligand>
        <name>Mg(2+)</name>
        <dbReference type="ChEBI" id="CHEBI:18420"/>
        <label>1</label>
        <note>catalytic; for RdRp activity</note>
    </ligand>
</feature>
<feature type="binding site" evidence="2">
    <location>
        <position position="1964"/>
    </location>
    <ligand>
        <name>Mg(2+)</name>
        <dbReference type="ChEBI" id="CHEBI:18420"/>
        <label>2</label>
        <note>catalytic; for RdRp activity</note>
    </ligand>
</feature>
<feature type="binding site" evidence="2">
    <location>
        <position position="2060"/>
    </location>
    <ligand>
        <name>Mg(2+)</name>
        <dbReference type="ChEBI" id="CHEBI:18420"/>
        <label>1</label>
        <note>catalytic; for RdRp activity</note>
    </ligand>
</feature>
<feature type="binding site" evidence="2">
    <location>
        <position position="2060"/>
    </location>
    <ligand>
        <name>Mg(2+)</name>
        <dbReference type="ChEBI" id="CHEBI:18420"/>
        <label>2</label>
        <note>catalytic; for RdRp activity</note>
    </ligand>
</feature>
<feature type="site" description="Cleavage; by autolysis" evidence="2">
    <location>
        <begin position="69"/>
        <end position="70"/>
    </location>
</feature>
<feature type="site" description="Cleavage; by protease 3C" evidence="3">
    <location>
        <begin position="330"/>
        <end position="331"/>
    </location>
</feature>
<feature type="site" description="Cleavage; by autolysis" evidence="3">
    <location>
        <begin position="859"/>
        <end position="860"/>
    </location>
</feature>
<feature type="site" description="Cleavage; by protease 3C" evidence="3">
    <location>
        <begin position="1009"/>
        <end position="1010"/>
    </location>
</feature>
<feature type="site" description="Cleavage; by protease 3C" evidence="3">
    <location>
        <begin position="1108"/>
        <end position="1109"/>
    </location>
</feature>
<feature type="site" description="Involved in the interaction with host RTN3" evidence="7">
    <location>
        <position position="1133"/>
    </location>
</feature>
<feature type="site" description="Cleavage; by protease 3C" evidence="3">
    <location>
        <begin position="1437"/>
        <end position="1438"/>
    </location>
</feature>
<feature type="site" description="Cleavage; by protease 3C" evidence="3">
    <location>
        <begin position="1526"/>
        <end position="1527"/>
    </location>
</feature>
<feature type="site" description="Cleavage; by protease 3C" evidence="3">
    <location>
        <begin position="1548"/>
        <end position="1549"/>
    </location>
</feature>
<feature type="site" description="Cleavage; by protease 3C" evidence="3">
    <location>
        <begin position="1731"/>
        <end position="1732"/>
    </location>
</feature>
<feature type="modified residue" description="O-(5'-phospho-RNA)-tyrosine" evidence="2">
    <location>
        <position position="1529"/>
    </location>
</feature>
<feature type="lipid moiety-binding region" description="N-myristoyl glycine; by host" evidence="2">
    <location>
        <position position="2"/>
    </location>
</feature>
<feature type="sequence variant" description="In rhodanine-resistant variant." evidence="14">
    <original>H</original>
    <variation>Y</variation>
    <location>
        <position position="223"/>
    </location>
</feature>
<feature type="sequence variant" description="In rhodanine-resistant variant." evidence="14">
    <original>G</original>
    <variation>S</variation>
    <location>
        <position position="228"/>
    </location>
</feature>
<feature type="sequence variant" description="In rhodanine-resistant variant." evidence="14">
    <original>I</original>
    <variation>M</variation>
    <location>
        <position position="376"/>
    </location>
</feature>
<feature type="sequence variant" description="In rhodanine-resistant variant." evidence="14">
    <original>Y</original>
    <variation>C</variation>
    <location>
        <position position="643"/>
    </location>
</feature>
<feature type="sequence variant" description="In rhodanine-resistant variant." evidence="14">
    <original>V</original>
    <variation>A</variation>
    <location>
        <position position="669"/>
    </location>
</feature>
<feature type="sequence variant" description="In rhodanine-resistant variant." evidence="14">
    <original>V</original>
    <variation>A</variation>
    <location>
        <position position="725"/>
    </location>
</feature>
<feature type="sequence variant" description="In rhodanine-resistant variant." evidence="14">
    <original>C</original>
    <variation>R</variation>
    <location>
        <position position="2094"/>
    </location>
</feature>